<evidence type="ECO:0000255" key="1">
    <source>
        <dbReference type="HAMAP-Rule" id="MF_00735"/>
    </source>
</evidence>
<dbReference type="EC" id="2.1.1.-" evidence="1"/>
<dbReference type="EMBL" id="CP000919">
    <property type="protein sequence ID" value="ACO18261.1"/>
    <property type="molecule type" value="Genomic_DNA"/>
</dbReference>
<dbReference type="RefSeq" id="WP_000451120.1">
    <property type="nucleotide sequence ID" value="NC_012466.1"/>
</dbReference>
<dbReference type="SMR" id="C1CG04"/>
<dbReference type="KEGG" id="sjj:SPJ_1681"/>
<dbReference type="HOGENOM" id="CLU_049382_0_1_9"/>
<dbReference type="Proteomes" id="UP000002206">
    <property type="component" value="Chromosome"/>
</dbReference>
<dbReference type="GO" id="GO:0005737">
    <property type="term" value="C:cytoplasm"/>
    <property type="evidence" value="ECO:0007669"/>
    <property type="project" value="UniProtKB-SubCell"/>
</dbReference>
<dbReference type="GO" id="GO:0016279">
    <property type="term" value="F:protein-lysine N-methyltransferase activity"/>
    <property type="evidence" value="ECO:0007669"/>
    <property type="project" value="RHEA"/>
</dbReference>
<dbReference type="GO" id="GO:0032259">
    <property type="term" value="P:methylation"/>
    <property type="evidence" value="ECO:0007669"/>
    <property type="project" value="UniProtKB-KW"/>
</dbReference>
<dbReference type="CDD" id="cd02440">
    <property type="entry name" value="AdoMet_MTases"/>
    <property type="match status" value="1"/>
</dbReference>
<dbReference type="Gene3D" id="3.40.50.150">
    <property type="entry name" value="Vaccinia Virus protein VP39"/>
    <property type="match status" value="1"/>
</dbReference>
<dbReference type="HAMAP" id="MF_00735">
    <property type="entry name" value="Methyltr_PrmA"/>
    <property type="match status" value="1"/>
</dbReference>
<dbReference type="InterPro" id="IPR050078">
    <property type="entry name" value="Ribosomal_L11_MeTrfase_PrmA"/>
</dbReference>
<dbReference type="InterPro" id="IPR004498">
    <property type="entry name" value="Ribosomal_PrmA_MeTrfase"/>
</dbReference>
<dbReference type="InterPro" id="IPR029063">
    <property type="entry name" value="SAM-dependent_MTases_sf"/>
</dbReference>
<dbReference type="NCBIfam" id="TIGR00406">
    <property type="entry name" value="prmA"/>
    <property type="match status" value="1"/>
</dbReference>
<dbReference type="PANTHER" id="PTHR43648">
    <property type="entry name" value="ELECTRON TRANSFER FLAVOPROTEIN BETA SUBUNIT LYSINE METHYLTRANSFERASE"/>
    <property type="match status" value="1"/>
</dbReference>
<dbReference type="PANTHER" id="PTHR43648:SF1">
    <property type="entry name" value="ELECTRON TRANSFER FLAVOPROTEIN BETA SUBUNIT LYSINE METHYLTRANSFERASE"/>
    <property type="match status" value="1"/>
</dbReference>
<dbReference type="Pfam" id="PF06325">
    <property type="entry name" value="PrmA"/>
    <property type="match status" value="1"/>
</dbReference>
<dbReference type="PIRSF" id="PIRSF000401">
    <property type="entry name" value="RPL11_MTase"/>
    <property type="match status" value="1"/>
</dbReference>
<dbReference type="SUPFAM" id="SSF53335">
    <property type="entry name" value="S-adenosyl-L-methionine-dependent methyltransferases"/>
    <property type="match status" value="1"/>
</dbReference>
<keyword id="KW-0963">Cytoplasm</keyword>
<keyword id="KW-0489">Methyltransferase</keyword>
<keyword id="KW-0949">S-adenosyl-L-methionine</keyword>
<keyword id="KW-0808">Transferase</keyword>
<reference key="1">
    <citation type="journal article" date="2010" name="Genome Biol.">
        <title>Structure and dynamics of the pan-genome of Streptococcus pneumoniae and closely related species.</title>
        <authorList>
            <person name="Donati C."/>
            <person name="Hiller N.L."/>
            <person name="Tettelin H."/>
            <person name="Muzzi A."/>
            <person name="Croucher N.J."/>
            <person name="Angiuoli S.V."/>
            <person name="Oggioni M."/>
            <person name="Dunning Hotopp J.C."/>
            <person name="Hu F.Z."/>
            <person name="Riley D.R."/>
            <person name="Covacci A."/>
            <person name="Mitchell T.J."/>
            <person name="Bentley S.D."/>
            <person name="Kilian M."/>
            <person name="Ehrlich G.D."/>
            <person name="Rappuoli R."/>
            <person name="Moxon E.R."/>
            <person name="Masignani V."/>
        </authorList>
    </citation>
    <scope>NUCLEOTIDE SEQUENCE [LARGE SCALE GENOMIC DNA]</scope>
    <source>
        <strain>JJA</strain>
    </source>
</reference>
<accession>C1CG04</accession>
<comment type="function">
    <text evidence="1">Methylates ribosomal protein L11.</text>
</comment>
<comment type="catalytic activity">
    <reaction evidence="1">
        <text>L-lysyl-[protein] + 3 S-adenosyl-L-methionine = N(6),N(6),N(6)-trimethyl-L-lysyl-[protein] + 3 S-adenosyl-L-homocysteine + 3 H(+)</text>
        <dbReference type="Rhea" id="RHEA:54192"/>
        <dbReference type="Rhea" id="RHEA-COMP:9752"/>
        <dbReference type="Rhea" id="RHEA-COMP:13826"/>
        <dbReference type="ChEBI" id="CHEBI:15378"/>
        <dbReference type="ChEBI" id="CHEBI:29969"/>
        <dbReference type="ChEBI" id="CHEBI:57856"/>
        <dbReference type="ChEBI" id="CHEBI:59789"/>
        <dbReference type="ChEBI" id="CHEBI:61961"/>
    </reaction>
</comment>
<comment type="subcellular location">
    <subcellularLocation>
        <location evidence="1">Cytoplasm</location>
    </subcellularLocation>
</comment>
<comment type="similarity">
    <text evidence="1">Belongs to the methyltransferase superfamily. PrmA family.</text>
</comment>
<organism>
    <name type="scientific">Streptococcus pneumoniae (strain JJA)</name>
    <dbReference type="NCBI Taxonomy" id="488222"/>
    <lineage>
        <taxon>Bacteria</taxon>
        <taxon>Bacillati</taxon>
        <taxon>Bacillota</taxon>
        <taxon>Bacilli</taxon>
        <taxon>Lactobacillales</taxon>
        <taxon>Streptococcaceae</taxon>
        <taxon>Streptococcus</taxon>
    </lineage>
</organism>
<sequence>METWQELKVTVKREGEELVSNLLIELGAQGVAIEDSLDYVGNVDRFGEIFPEVEQQEEIVVTAYYPDTVDVTVVEADLQARISELTDFMDLGELKIGTTALAEEDWADNWKKYYEPARITHDLTIVPSWTDYEATAGEKIIKLDPGMAFGTGTHPTTKMSLFALEQVLRGGETVLDVGTGSGVLSIASSLLGAKEIFAYDLDDVAVRVAQENIELNPGMENIHVAAGDLLKGVEIEADVIVANILADILIHLIDDAYRLVKDEGYLIMSGIIKDKWDMVRESAESAGFFLETHMVQGEWNTCVFKKTKDISGVIGG</sequence>
<protein>
    <recommendedName>
        <fullName evidence="1">Ribosomal protein L11 methyltransferase</fullName>
        <shortName evidence="1">L11 Mtase</shortName>
        <ecNumber evidence="1">2.1.1.-</ecNumber>
    </recommendedName>
</protein>
<gene>
    <name evidence="1" type="primary">prmA</name>
    <name type="ordered locus">SPJ_1681</name>
</gene>
<feature type="chain" id="PRO_1000148144" description="Ribosomal protein L11 methyltransferase">
    <location>
        <begin position="1"/>
        <end position="316"/>
    </location>
</feature>
<feature type="binding site" evidence="1">
    <location>
        <position position="157"/>
    </location>
    <ligand>
        <name>S-adenosyl-L-methionine</name>
        <dbReference type="ChEBI" id="CHEBI:59789"/>
    </ligand>
</feature>
<feature type="binding site" evidence="1">
    <location>
        <position position="178"/>
    </location>
    <ligand>
        <name>S-adenosyl-L-methionine</name>
        <dbReference type="ChEBI" id="CHEBI:59789"/>
    </ligand>
</feature>
<feature type="binding site" evidence="1">
    <location>
        <position position="200"/>
    </location>
    <ligand>
        <name>S-adenosyl-L-methionine</name>
        <dbReference type="ChEBI" id="CHEBI:59789"/>
    </ligand>
</feature>
<feature type="binding site" evidence="1">
    <location>
        <position position="243"/>
    </location>
    <ligand>
        <name>S-adenosyl-L-methionine</name>
        <dbReference type="ChEBI" id="CHEBI:59789"/>
    </ligand>
</feature>
<name>PRMA_STRZJ</name>
<proteinExistence type="inferred from homology"/>